<protein>
    <recommendedName>
        <fullName>Red-sensitive opsin-2</fullName>
    </recommendedName>
    <alternativeName>
        <fullName>Opsin-1, long-wave-sensitive 2</fullName>
        <shortName>Opsin LWS-2</shortName>
    </alternativeName>
    <alternativeName>
        <fullName>Red cone photoreceptor pigment 2</fullName>
    </alternativeName>
</protein>
<reference key="1">
    <citation type="journal article" date="2003" name="Genetics">
        <title>Gene duplication and spectral diversification of cone visual pigments of zebrafish.</title>
        <authorList>
            <person name="Chinen A."/>
            <person name="Hamaoka T."/>
            <person name="Yamada Y."/>
            <person name="Kawamura S."/>
        </authorList>
    </citation>
    <scope>NUCLEOTIDE SEQUENCE [GENOMIC DNA / MRNA]</scope>
    <scope>BIOPHYSICOCHEMICAL PROPERTIES</scope>
    <source>
        <strain>AB</strain>
        <tissue>Eye</tissue>
    </source>
</reference>
<reference key="2">
    <citation type="journal article" date="2013" name="Nature">
        <title>The zebrafish reference genome sequence and its relationship to the human genome.</title>
        <authorList>
            <person name="Howe K."/>
            <person name="Clark M.D."/>
            <person name="Torroja C.F."/>
            <person name="Torrance J."/>
            <person name="Berthelot C."/>
            <person name="Muffato M."/>
            <person name="Collins J.E."/>
            <person name="Humphray S."/>
            <person name="McLaren K."/>
            <person name="Matthews L."/>
            <person name="McLaren S."/>
            <person name="Sealy I."/>
            <person name="Caccamo M."/>
            <person name="Churcher C."/>
            <person name="Scott C."/>
            <person name="Barrett J.C."/>
            <person name="Koch R."/>
            <person name="Rauch G.J."/>
            <person name="White S."/>
            <person name="Chow W."/>
            <person name="Kilian B."/>
            <person name="Quintais L.T."/>
            <person name="Guerra-Assuncao J.A."/>
            <person name="Zhou Y."/>
            <person name="Gu Y."/>
            <person name="Yen J."/>
            <person name="Vogel J.H."/>
            <person name="Eyre T."/>
            <person name="Redmond S."/>
            <person name="Banerjee R."/>
            <person name="Chi J."/>
            <person name="Fu B."/>
            <person name="Langley E."/>
            <person name="Maguire S.F."/>
            <person name="Laird G.K."/>
            <person name="Lloyd D."/>
            <person name="Kenyon E."/>
            <person name="Donaldson S."/>
            <person name="Sehra H."/>
            <person name="Almeida-King J."/>
            <person name="Loveland J."/>
            <person name="Trevanion S."/>
            <person name="Jones M."/>
            <person name="Quail M."/>
            <person name="Willey D."/>
            <person name="Hunt A."/>
            <person name="Burton J."/>
            <person name="Sims S."/>
            <person name="McLay K."/>
            <person name="Plumb B."/>
            <person name="Davis J."/>
            <person name="Clee C."/>
            <person name="Oliver K."/>
            <person name="Clark R."/>
            <person name="Riddle C."/>
            <person name="Elliot D."/>
            <person name="Threadgold G."/>
            <person name="Harden G."/>
            <person name="Ware D."/>
            <person name="Begum S."/>
            <person name="Mortimore B."/>
            <person name="Kerry G."/>
            <person name="Heath P."/>
            <person name="Phillimore B."/>
            <person name="Tracey A."/>
            <person name="Corby N."/>
            <person name="Dunn M."/>
            <person name="Johnson C."/>
            <person name="Wood J."/>
            <person name="Clark S."/>
            <person name="Pelan S."/>
            <person name="Griffiths G."/>
            <person name="Smith M."/>
            <person name="Glithero R."/>
            <person name="Howden P."/>
            <person name="Barker N."/>
            <person name="Lloyd C."/>
            <person name="Stevens C."/>
            <person name="Harley J."/>
            <person name="Holt K."/>
            <person name="Panagiotidis G."/>
            <person name="Lovell J."/>
            <person name="Beasley H."/>
            <person name="Henderson C."/>
            <person name="Gordon D."/>
            <person name="Auger K."/>
            <person name="Wright D."/>
            <person name="Collins J."/>
            <person name="Raisen C."/>
            <person name="Dyer L."/>
            <person name="Leung K."/>
            <person name="Robertson L."/>
            <person name="Ambridge K."/>
            <person name="Leongamornlert D."/>
            <person name="McGuire S."/>
            <person name="Gilderthorp R."/>
            <person name="Griffiths C."/>
            <person name="Manthravadi D."/>
            <person name="Nichol S."/>
            <person name="Barker G."/>
            <person name="Whitehead S."/>
            <person name="Kay M."/>
            <person name="Brown J."/>
            <person name="Murnane C."/>
            <person name="Gray E."/>
            <person name="Humphries M."/>
            <person name="Sycamore N."/>
            <person name="Barker D."/>
            <person name="Saunders D."/>
            <person name="Wallis J."/>
            <person name="Babbage A."/>
            <person name="Hammond S."/>
            <person name="Mashreghi-Mohammadi M."/>
            <person name="Barr L."/>
            <person name="Martin S."/>
            <person name="Wray P."/>
            <person name="Ellington A."/>
            <person name="Matthews N."/>
            <person name="Ellwood M."/>
            <person name="Woodmansey R."/>
            <person name="Clark G."/>
            <person name="Cooper J."/>
            <person name="Tromans A."/>
            <person name="Grafham D."/>
            <person name="Skuce C."/>
            <person name="Pandian R."/>
            <person name="Andrews R."/>
            <person name="Harrison E."/>
            <person name="Kimberley A."/>
            <person name="Garnett J."/>
            <person name="Fosker N."/>
            <person name="Hall R."/>
            <person name="Garner P."/>
            <person name="Kelly D."/>
            <person name="Bird C."/>
            <person name="Palmer S."/>
            <person name="Gehring I."/>
            <person name="Berger A."/>
            <person name="Dooley C.M."/>
            <person name="Ersan-Urun Z."/>
            <person name="Eser C."/>
            <person name="Geiger H."/>
            <person name="Geisler M."/>
            <person name="Karotki L."/>
            <person name="Kirn A."/>
            <person name="Konantz J."/>
            <person name="Konantz M."/>
            <person name="Oberlander M."/>
            <person name="Rudolph-Geiger S."/>
            <person name="Teucke M."/>
            <person name="Lanz C."/>
            <person name="Raddatz G."/>
            <person name="Osoegawa K."/>
            <person name="Zhu B."/>
            <person name="Rapp A."/>
            <person name="Widaa S."/>
            <person name="Langford C."/>
            <person name="Yang F."/>
            <person name="Schuster S.C."/>
            <person name="Carter N.P."/>
            <person name="Harrow J."/>
            <person name="Ning Z."/>
            <person name="Herrero J."/>
            <person name="Searle S.M."/>
            <person name="Enright A."/>
            <person name="Geisler R."/>
            <person name="Plasterk R.H."/>
            <person name="Lee C."/>
            <person name="Westerfield M."/>
            <person name="de Jong P.J."/>
            <person name="Zon L.I."/>
            <person name="Postlethwait J.H."/>
            <person name="Nusslein-Volhard C."/>
            <person name="Hubbard T.J."/>
            <person name="Roest Crollius H."/>
            <person name="Rogers J."/>
            <person name="Stemple D.L."/>
        </authorList>
    </citation>
    <scope>NUCLEOTIDE SEQUENCE [LARGE SCALE GENOMIC DNA]</scope>
    <source>
        <strain>Tuebingen</strain>
    </source>
</reference>
<reference key="3">
    <citation type="submission" date="2004-07" db="EMBL/GenBank/DDBJ databases">
        <authorList>
            <consortium name="NIH - Zebrafish Gene Collection (ZGC) project"/>
        </authorList>
    </citation>
    <scope>NUCLEOTIDE SEQUENCE [LARGE SCALE MRNA]</scope>
    <source>
        <tissue>Eye</tissue>
    </source>
</reference>
<comment type="function">
    <text>Visual pigments are the light-absorbing molecules that mediate vision. They consist of an apoprotein, opsin, covalently linked to cis-retinal.</text>
</comment>
<comment type="biophysicochemical properties">
    <absorption>
        <max evidence="4">548 nm</max>
    </absorption>
</comment>
<comment type="subcellular location">
    <subcellularLocation>
        <location>Membrane</location>
        <topology>Multi-pass membrane protein</topology>
    </subcellularLocation>
</comment>
<comment type="PTM">
    <text evidence="1">Phosphorylated on some or all of the serine and threonine residues present in the C-terminal region.</text>
</comment>
<comment type="similarity">
    <text evidence="3">Belongs to the G-protein coupled receptor 1 family. Opsin subfamily.</text>
</comment>
<accession>Q8AYN0</accession>
<accession>Q6DH62</accession>
<feature type="chain" id="PRO_0000197794" description="Red-sensitive opsin-2">
    <location>
        <begin position="1"/>
        <end position="356"/>
    </location>
</feature>
<feature type="topological domain" description="Extracellular" evidence="2">
    <location>
        <begin position="1"/>
        <end position="48"/>
    </location>
</feature>
<feature type="transmembrane region" description="Helical; Name=1" evidence="2">
    <location>
        <begin position="49"/>
        <end position="73"/>
    </location>
</feature>
<feature type="topological domain" description="Cytoplasmic" evidence="2">
    <location>
        <begin position="74"/>
        <end position="85"/>
    </location>
</feature>
<feature type="transmembrane region" description="Helical; Name=2" evidence="2">
    <location>
        <begin position="86"/>
        <end position="111"/>
    </location>
</feature>
<feature type="topological domain" description="Extracellular" evidence="2">
    <location>
        <begin position="112"/>
        <end position="125"/>
    </location>
</feature>
<feature type="transmembrane region" description="Helical; Name=3" evidence="2">
    <location>
        <begin position="126"/>
        <end position="145"/>
    </location>
</feature>
<feature type="topological domain" description="Cytoplasmic" evidence="2">
    <location>
        <begin position="146"/>
        <end position="164"/>
    </location>
</feature>
<feature type="transmembrane region" description="Helical; Name=4" evidence="2">
    <location>
        <begin position="165"/>
        <end position="188"/>
    </location>
</feature>
<feature type="topological domain" description="Extracellular" evidence="2">
    <location>
        <begin position="189"/>
        <end position="214"/>
    </location>
</feature>
<feature type="transmembrane region" description="Helical; Name=5" evidence="2">
    <location>
        <begin position="215"/>
        <end position="242"/>
    </location>
</feature>
<feature type="topological domain" description="Cytoplasmic" evidence="2">
    <location>
        <begin position="243"/>
        <end position="264"/>
    </location>
</feature>
<feature type="transmembrane region" description="Helical; Name=6" evidence="2">
    <location>
        <begin position="265"/>
        <end position="288"/>
    </location>
</feature>
<feature type="topological domain" description="Extracellular" evidence="2">
    <location>
        <begin position="289"/>
        <end position="296"/>
    </location>
</feature>
<feature type="transmembrane region" description="Helical; Name=7" evidence="2">
    <location>
        <begin position="297"/>
        <end position="321"/>
    </location>
</feature>
<feature type="topological domain" description="Cytoplasmic" evidence="2">
    <location>
        <begin position="322"/>
        <end position="356"/>
    </location>
</feature>
<feature type="modified residue" description="N6-(retinylidene)lysine" evidence="1">
    <location>
        <position position="308"/>
    </location>
</feature>
<feature type="glycosylation site" description="N-linked (GlcNAc...) asparagine" evidence="2">
    <location>
        <position position="30"/>
    </location>
</feature>
<feature type="disulfide bond" evidence="3">
    <location>
        <begin position="122"/>
        <end position="199"/>
    </location>
</feature>
<feature type="sequence conflict" description="In Ref. 3; AAH76120." evidence="5" ref="3">
    <original>A</original>
    <variation>G</variation>
    <location>
        <position position="7"/>
    </location>
</feature>
<feature type="sequence conflict" description="In Ref. 3; AAH76120." evidence="5" ref="3">
    <original>A</original>
    <variation>S</variation>
    <location>
        <position position="102"/>
    </location>
</feature>
<feature type="sequence conflict" description="In Ref. 3; AAH76120." evidence="5" ref="3">
    <original>I</original>
    <variation>V</variation>
    <location>
        <position position="270"/>
    </location>
</feature>
<keyword id="KW-0157">Chromophore</keyword>
<keyword id="KW-1015">Disulfide bond</keyword>
<keyword id="KW-0297">G-protein coupled receptor</keyword>
<keyword id="KW-0325">Glycoprotein</keyword>
<keyword id="KW-0472">Membrane</keyword>
<keyword id="KW-0597">Phosphoprotein</keyword>
<keyword id="KW-0600">Photoreceptor protein</keyword>
<keyword id="KW-0675">Receptor</keyword>
<keyword id="KW-1185">Reference proteome</keyword>
<keyword id="KW-0681">Retinal protein</keyword>
<keyword id="KW-0716">Sensory transduction</keyword>
<keyword id="KW-0807">Transducer</keyword>
<keyword id="KW-0812">Transmembrane</keyword>
<keyword id="KW-1133">Transmembrane helix</keyword>
<keyword id="KW-0844">Vision</keyword>
<sequence>MAEWANAAFAARRRGDETTRDNAFSYTNSNNTRDPFEGPNYHIAPRWVYNVATVWMFFVVVASTFTNGLVLVATAKFKKLRHPLNWILVNLAIADLGETLFASTISVINQVFGYFILGHPMCIFEGYTVSVCGIAGLWSLTVISWERWVVVCKPFGNVKFDGKWASAGIIFSWVWAAVWCAPPIFGWSRYWPHGLKTSCGPDVFGGNEDPGVQSYMLVLMITCCILPLAIIILCYIAVFLAIHAVAQQQKDSESTQKAEKEVSRMVVVMILAFCLCWGPYTAFACFAAANPGYAFHPLAAAMPAYFAKSATIYNPIIYVFMNRQFRVCIMQLFGKKVDDGSEVSTSKTEVSSVAPA</sequence>
<gene>
    <name type="primary">opn1lw2</name>
    <name type="synonym">lws2</name>
    <name type="ORF">zgc:92632</name>
</gene>
<name>OPSR2_DANRE</name>
<organism>
    <name type="scientific">Danio rerio</name>
    <name type="common">Zebrafish</name>
    <name type="synonym">Brachydanio rerio</name>
    <dbReference type="NCBI Taxonomy" id="7955"/>
    <lineage>
        <taxon>Eukaryota</taxon>
        <taxon>Metazoa</taxon>
        <taxon>Chordata</taxon>
        <taxon>Craniata</taxon>
        <taxon>Vertebrata</taxon>
        <taxon>Euteleostomi</taxon>
        <taxon>Actinopterygii</taxon>
        <taxon>Neopterygii</taxon>
        <taxon>Teleostei</taxon>
        <taxon>Ostariophysi</taxon>
        <taxon>Cypriniformes</taxon>
        <taxon>Danionidae</taxon>
        <taxon>Danioninae</taxon>
        <taxon>Danio</taxon>
    </lineage>
</organism>
<proteinExistence type="evidence at protein level"/>
<dbReference type="EMBL" id="AB087804">
    <property type="protein sequence ID" value="BAC24128.1"/>
    <property type="molecule type" value="Genomic_DNA"/>
</dbReference>
<dbReference type="EMBL" id="AL844847">
    <property type="protein sequence ID" value="CAE30417.1"/>
    <property type="molecule type" value="Genomic_DNA"/>
</dbReference>
<dbReference type="EMBL" id="BC076120">
    <property type="protein sequence ID" value="AAH76120.1"/>
    <property type="molecule type" value="mRNA"/>
</dbReference>
<dbReference type="RefSeq" id="NP_001002443.1">
    <property type="nucleotide sequence ID" value="NM_001002443.2"/>
</dbReference>
<dbReference type="SMR" id="Q8AYN0"/>
<dbReference type="FunCoup" id="Q8AYN0">
    <property type="interactions" value="340"/>
</dbReference>
<dbReference type="STRING" id="7955.ENSDARP00000065939"/>
<dbReference type="GlyCosmos" id="Q8AYN0">
    <property type="glycosylation" value="1 site, No reported glycans"/>
</dbReference>
<dbReference type="PaxDb" id="7955-ENSDARP00000065939"/>
<dbReference type="Ensembl" id="ENSDART00000065940">
    <property type="protein sequence ID" value="ENSDARP00000065939"/>
    <property type="gene ID" value="ENSDARG00000044861"/>
</dbReference>
<dbReference type="Ensembl" id="ENSDART00000189991">
    <property type="protein sequence ID" value="ENSDARP00000149112"/>
    <property type="gene ID" value="ENSDARG00000115709"/>
</dbReference>
<dbReference type="GeneID" id="436716"/>
<dbReference type="KEGG" id="dre:436716"/>
<dbReference type="AGR" id="ZFIN:ZDB-GENE-040718-141"/>
<dbReference type="CTD" id="436716"/>
<dbReference type="ZFIN" id="ZDB-GENE-040718-141">
    <property type="gene designation" value="opn1lw2"/>
</dbReference>
<dbReference type="eggNOG" id="KOG3656">
    <property type="taxonomic scope" value="Eukaryota"/>
</dbReference>
<dbReference type="HOGENOM" id="CLU_009579_3_0_1"/>
<dbReference type="InParanoid" id="Q8AYN0"/>
<dbReference type="OMA" id="CAVEWDS"/>
<dbReference type="OrthoDB" id="8545112at2759"/>
<dbReference type="PhylomeDB" id="Q8AYN0"/>
<dbReference type="TreeFam" id="TF324998"/>
<dbReference type="Reactome" id="R-DRE-2187335">
    <property type="pathway name" value="The retinoid cycle in cones (daylight vision)"/>
</dbReference>
<dbReference type="Reactome" id="R-DRE-418594">
    <property type="pathway name" value="G alpha (i) signalling events"/>
</dbReference>
<dbReference type="Reactome" id="R-DRE-419771">
    <property type="pathway name" value="Opsins"/>
</dbReference>
<dbReference type="PRO" id="PR:Q8AYN0"/>
<dbReference type="Proteomes" id="UP000000437">
    <property type="component" value="Alternate scaffold 11"/>
</dbReference>
<dbReference type="Proteomes" id="UP000000437">
    <property type="component" value="Chromosome 11"/>
</dbReference>
<dbReference type="Bgee" id="ENSDARG00000044861">
    <property type="expression patterns" value="Expressed in retina and 4 other cell types or tissues"/>
</dbReference>
<dbReference type="ExpressionAtlas" id="Q8AYN0">
    <property type="expression patterns" value="differential"/>
</dbReference>
<dbReference type="GO" id="GO:0001750">
    <property type="term" value="C:photoreceptor outer segment"/>
    <property type="evidence" value="ECO:0000318"/>
    <property type="project" value="GO_Central"/>
</dbReference>
<dbReference type="GO" id="GO:0005886">
    <property type="term" value="C:plasma membrane"/>
    <property type="evidence" value="ECO:0000318"/>
    <property type="project" value="GO_Central"/>
</dbReference>
<dbReference type="GO" id="GO:0008020">
    <property type="term" value="F:G protein-coupled photoreceptor activity"/>
    <property type="evidence" value="ECO:0000318"/>
    <property type="project" value="GO_Central"/>
</dbReference>
<dbReference type="GO" id="GO:0071482">
    <property type="term" value="P:cellular response to light stimulus"/>
    <property type="evidence" value="ECO:0000318"/>
    <property type="project" value="GO_Central"/>
</dbReference>
<dbReference type="GO" id="GO:0007186">
    <property type="term" value="P:G protein-coupled receptor signaling pathway"/>
    <property type="evidence" value="ECO:0000318"/>
    <property type="project" value="GO_Central"/>
</dbReference>
<dbReference type="GO" id="GO:0007602">
    <property type="term" value="P:phototransduction"/>
    <property type="evidence" value="ECO:0000318"/>
    <property type="project" value="GO_Central"/>
</dbReference>
<dbReference type="GO" id="GO:0007601">
    <property type="term" value="P:visual perception"/>
    <property type="evidence" value="ECO:0007669"/>
    <property type="project" value="UniProtKB-KW"/>
</dbReference>
<dbReference type="CDD" id="cd15081">
    <property type="entry name" value="7tmA_LWS_opsin"/>
    <property type="match status" value="1"/>
</dbReference>
<dbReference type="FunFam" id="1.20.1070.10:FF:000090">
    <property type="entry name" value="Long-wave-sensitive opsin 1"/>
    <property type="match status" value="1"/>
</dbReference>
<dbReference type="Gene3D" id="1.20.1070.10">
    <property type="entry name" value="Rhodopsin 7-helix transmembrane proteins"/>
    <property type="match status" value="1"/>
</dbReference>
<dbReference type="InterPro" id="IPR050125">
    <property type="entry name" value="GPCR_opsins"/>
</dbReference>
<dbReference type="InterPro" id="IPR000276">
    <property type="entry name" value="GPCR_Rhodpsn"/>
</dbReference>
<dbReference type="InterPro" id="IPR017452">
    <property type="entry name" value="GPCR_Rhodpsn_7TM"/>
</dbReference>
<dbReference type="InterPro" id="IPR001760">
    <property type="entry name" value="Opsin"/>
</dbReference>
<dbReference type="InterPro" id="IPR000378">
    <property type="entry name" value="Opsin_red/grn"/>
</dbReference>
<dbReference type="InterPro" id="IPR027430">
    <property type="entry name" value="Retinal_BS"/>
</dbReference>
<dbReference type="PANTHER" id="PTHR24240">
    <property type="entry name" value="OPSIN"/>
    <property type="match status" value="1"/>
</dbReference>
<dbReference type="Pfam" id="PF00001">
    <property type="entry name" value="7tm_1"/>
    <property type="match status" value="1"/>
</dbReference>
<dbReference type="PRINTS" id="PR00237">
    <property type="entry name" value="GPCRRHODOPSN"/>
</dbReference>
<dbReference type="PRINTS" id="PR00238">
    <property type="entry name" value="OPSIN"/>
</dbReference>
<dbReference type="PRINTS" id="PR00575">
    <property type="entry name" value="OPSINREDGRN"/>
</dbReference>
<dbReference type="SMART" id="SM01381">
    <property type="entry name" value="7TM_GPCR_Srsx"/>
    <property type="match status" value="1"/>
</dbReference>
<dbReference type="SUPFAM" id="SSF81321">
    <property type="entry name" value="Family A G protein-coupled receptor-like"/>
    <property type="match status" value="1"/>
</dbReference>
<dbReference type="PROSITE" id="PS00237">
    <property type="entry name" value="G_PROTEIN_RECEP_F1_1"/>
    <property type="match status" value="1"/>
</dbReference>
<dbReference type="PROSITE" id="PS50262">
    <property type="entry name" value="G_PROTEIN_RECEP_F1_2"/>
    <property type="match status" value="1"/>
</dbReference>
<dbReference type="PROSITE" id="PS00238">
    <property type="entry name" value="OPSIN"/>
    <property type="match status" value="1"/>
</dbReference>
<evidence type="ECO:0000250" key="1"/>
<evidence type="ECO:0000255" key="2"/>
<evidence type="ECO:0000255" key="3">
    <source>
        <dbReference type="PROSITE-ProRule" id="PRU00521"/>
    </source>
</evidence>
<evidence type="ECO:0000269" key="4">
    <source>
    </source>
</evidence>
<evidence type="ECO:0000305" key="5"/>